<dbReference type="EC" id="2.5.1.138" evidence="2"/>
<dbReference type="EMBL" id="AB813876">
    <property type="protein sequence ID" value="BAP27988.1"/>
    <property type="molecule type" value="mRNA"/>
</dbReference>
<dbReference type="SMR" id="A0A077K8G3"/>
<dbReference type="KEGG" id="ag:BAP27988"/>
<dbReference type="BRENDA" id="2.5.1.138">
    <property type="organism ID" value="1413"/>
</dbReference>
<dbReference type="GO" id="GO:0009507">
    <property type="term" value="C:chloroplast"/>
    <property type="evidence" value="ECO:0000314"/>
    <property type="project" value="UniProtKB"/>
</dbReference>
<dbReference type="GO" id="GO:0031969">
    <property type="term" value="C:chloroplast membrane"/>
    <property type="evidence" value="ECO:0007669"/>
    <property type="project" value="UniProtKB-SubCell"/>
</dbReference>
<dbReference type="GO" id="GO:0004659">
    <property type="term" value="F:prenyltransferase activity"/>
    <property type="evidence" value="ECO:0000314"/>
    <property type="project" value="UniProtKB"/>
</dbReference>
<dbReference type="FunFam" id="1.10.357.140:FF:000011">
    <property type="entry name" value="Homogentisate phytyltransferase 1"/>
    <property type="match status" value="1"/>
</dbReference>
<dbReference type="Gene3D" id="1.10.357.140">
    <property type="entry name" value="UbiA prenyltransferase"/>
    <property type="match status" value="1"/>
</dbReference>
<dbReference type="InterPro" id="IPR000537">
    <property type="entry name" value="UbiA_prenyltransferase"/>
</dbReference>
<dbReference type="InterPro" id="IPR044878">
    <property type="entry name" value="UbiA_sf"/>
</dbReference>
<dbReference type="PANTHER" id="PTHR43009:SF7">
    <property type="entry name" value="HOMOGENTISATE GERANYLGERANYLTRANSFERASE, CHLOROPLASTIC"/>
    <property type="match status" value="1"/>
</dbReference>
<dbReference type="PANTHER" id="PTHR43009">
    <property type="entry name" value="HOMOGENTISATE SOLANESYLTRANSFERASE, CHLOROPLASTIC"/>
    <property type="match status" value="1"/>
</dbReference>
<dbReference type="Pfam" id="PF01040">
    <property type="entry name" value="UbiA"/>
    <property type="match status" value="1"/>
</dbReference>
<proteinExistence type="evidence at protein level"/>
<gene>
    <name evidence="3" type="primary">ClPT1</name>
    <name evidence="3" type="synonym">PT1a</name>
</gene>
<protein>
    <recommendedName>
        <fullName>Coumarin 8-geranyltransferase 1, chloroplastic</fullName>
        <ecNumber evidence="2">2.5.1.138</ecNumber>
    </recommendedName>
    <alternativeName>
        <fullName evidence="3">Prenyltransferase 1</fullName>
        <shortName evidence="3">ClPT1</shortName>
    </alternativeName>
    <alternativeName>
        <fullName evidence="3">Umbelliferone 8-C-geranyltransferase</fullName>
        <shortName evidence="3">U8GT</shortName>
    </alternativeName>
</protein>
<evidence type="ECO:0000255" key="1"/>
<evidence type="ECO:0000269" key="2">
    <source>
    </source>
</evidence>
<evidence type="ECO:0000303" key="3">
    <source>
    </source>
</evidence>
<evidence type="ECO:0000305" key="4"/>
<evidence type="ECO:0000312" key="5">
    <source>
        <dbReference type="EMBL" id="BAP27988.1"/>
    </source>
</evidence>
<accession>A0A077K8G3</accession>
<comment type="function">
    <text evidence="2">Prenyltransferase specific for geranyl diphosphate as prenyl donor and coumarin as prenyl acceptor. Can use umbelliferone and esculetin as substrates, and with a lower activity, 5,7-dihydroxy-coumarin and 5-methoxy-7-hydroxycoumarin. No activity with 5-hydroxy-7-methoxycoumarin, bergaptol, xanthotoxol, p-coumaric acid, caffeic acid, 2,4-dihydroxycinnamic acid, kaempferol, genistein or homogentisate. No activity with dimethylallyl diphosphate, farnesyl diphosphate or geranylgeranyl diphosphate as prenyl donors.</text>
</comment>
<comment type="catalytic activity">
    <reaction evidence="2">
        <text>umbelliferone + (2E)-geranyl diphosphate = 8-geranylumbelliferone + diphosphate</text>
        <dbReference type="Rhea" id="RHEA:51860"/>
        <dbReference type="ChEBI" id="CHEBI:27510"/>
        <dbReference type="ChEBI" id="CHEBI:33019"/>
        <dbReference type="ChEBI" id="CHEBI:58057"/>
        <dbReference type="ChEBI" id="CHEBI:134358"/>
        <dbReference type="EC" id="2.5.1.138"/>
    </reaction>
</comment>
<comment type="catalytic activity">
    <reaction evidence="2">
        <text>esculetin + (2E)-geranyl diphosphate = 8-geranylesculetin + diphosphate</text>
        <dbReference type="Rhea" id="RHEA:51864"/>
        <dbReference type="ChEBI" id="CHEBI:33019"/>
        <dbReference type="ChEBI" id="CHEBI:58057"/>
        <dbReference type="ChEBI" id="CHEBI:134359"/>
        <dbReference type="ChEBI" id="CHEBI:490095"/>
        <dbReference type="EC" id="2.5.1.138"/>
    </reaction>
</comment>
<comment type="cofactor">
    <cofactor evidence="2">
        <name>Mg(2+)</name>
        <dbReference type="ChEBI" id="CHEBI:18420"/>
    </cofactor>
</comment>
<comment type="biophysicochemical properties">
    <kinetics>
        <KM evidence="2">6.1 uM for umbelliferone</KM>
        <KM evidence="2">4.8 uM for geranyl diphosphate</KM>
    </kinetics>
</comment>
<comment type="subcellular location">
    <subcellularLocation>
        <location evidence="2">Plastid</location>
        <location evidence="2">Chloroplast membrane</location>
        <topology evidence="1">Multi-pass membrane protein</topology>
    </subcellularLocation>
</comment>
<comment type="tissue specificity">
    <text evidence="2">Expressed in leaves. Detected in the flavedo of lemon peels, but not in albedo.</text>
</comment>
<comment type="similarity">
    <text evidence="4">Belongs to the UbiA prenyltransferase family.</text>
</comment>
<feature type="transit peptide" description="Chloroplast" evidence="1">
    <location>
        <begin position="1"/>
        <end position="81"/>
    </location>
</feature>
<feature type="chain" id="PRO_0000440665" description="Coumarin 8-geranyltransferase 1, chloroplastic">
    <location>
        <begin position="82"/>
        <end position="407"/>
    </location>
</feature>
<feature type="transmembrane region" description="Helical" evidence="1">
    <location>
        <begin position="121"/>
        <end position="141"/>
    </location>
</feature>
<feature type="transmembrane region" description="Helical" evidence="1">
    <location>
        <begin position="184"/>
        <end position="204"/>
    </location>
</feature>
<feature type="transmembrane region" description="Helical" evidence="1">
    <location>
        <begin position="209"/>
        <end position="229"/>
    </location>
</feature>
<feature type="transmembrane region" description="Helical" evidence="1">
    <location>
        <begin position="248"/>
        <end position="268"/>
    </location>
</feature>
<feature type="transmembrane region" description="Helical" evidence="1">
    <location>
        <begin position="279"/>
        <end position="299"/>
    </location>
</feature>
<feature type="transmembrane region" description="Helical" evidence="1">
    <location>
        <begin position="328"/>
        <end position="348"/>
    </location>
</feature>
<feature type="transmembrane region" description="Helical" evidence="1">
    <location>
        <begin position="352"/>
        <end position="372"/>
    </location>
</feature>
<feature type="transmembrane region" description="Helical" evidence="1">
    <location>
        <begin position="386"/>
        <end position="406"/>
    </location>
</feature>
<reference key="1">
    <citation type="journal article" date="2014" name="Plant Physiol.">
        <title>Molecular cloning and characterization of a geranyl diphosphate-specific aromatic prenyltransferase from lemon.</title>
        <authorList>
            <person name="Munakata R."/>
            <person name="Inoue T."/>
            <person name="Koeduka T."/>
            <person name="Karamat F."/>
            <person name="Olry A."/>
            <person name="Sugiyama A."/>
            <person name="Takanashi K."/>
            <person name="Dugrand A."/>
            <person name="Froelicher Y."/>
            <person name="Tanaka R."/>
            <person name="Uto Y."/>
            <person name="Hori H."/>
            <person name="Azuma J."/>
            <person name="Hehn A."/>
            <person name="Bourgaud F."/>
            <person name="Yazaki K."/>
        </authorList>
    </citation>
    <scope>NUCLEOTIDE SEQUENCE [MRNA]</scope>
    <scope>FUNCTION</scope>
    <scope>CATALYTIC ACTIVITY</scope>
    <scope>BIOPHYSICOCHEMICAL PROPERTIES</scope>
    <scope>COFACTOR</scope>
    <scope>SUBSTRATE SPECIFICITY</scope>
    <scope>SUBCELLULAR LOCATION</scope>
    <scope>TISSUE SPECIFICITY</scope>
    <source>
        <strain>cv. Lisbon</strain>
    </source>
</reference>
<name>CGT1A_CITLI</name>
<sequence>MLQMHSNSSFSPKCYYPLQHAGCVKTLQLPLTKVHGGLNRSESKNYAIKCTQSDSFYSTNKIRNNENSSSRNCKPFNKYRVAVTLQQQDCASNNEDDINSTSFRDVLLKKLHALYVFTRPFAMIGTIVGITSIAILPLQSFADLTPKYFMEFLKALLSAVLMNNYVGTVNQVADVEIDKVNKPGLPLASGDLSVGTGLAITLILSLTSLAIALSLQSPPLIFGLIVWFLLGTAYSVDLPFLRWKTNPFLAGMCMVIVFGLVYQFSFFIHFQKYVLGRPVVITRPLIFAAAIISTISAVMSLLKDIPDEDGDKQFGYQSISSKLGKENVLRLCVYALFFAYGVAVIVGASSSFQLGKLVSIIGHSTLAFLLWLRAQTVDLSNNASTFSFYLFVWKLFYGEYLLIHFLR</sequence>
<organism evidence="5">
    <name type="scientific">Citrus limon</name>
    <name type="common">Lemon</name>
    <name type="synonym">Citrus medica var. limon</name>
    <dbReference type="NCBI Taxonomy" id="2708"/>
    <lineage>
        <taxon>Eukaryota</taxon>
        <taxon>Viridiplantae</taxon>
        <taxon>Streptophyta</taxon>
        <taxon>Embryophyta</taxon>
        <taxon>Tracheophyta</taxon>
        <taxon>Spermatophyta</taxon>
        <taxon>Magnoliopsida</taxon>
        <taxon>eudicotyledons</taxon>
        <taxon>Gunneridae</taxon>
        <taxon>Pentapetalae</taxon>
        <taxon>rosids</taxon>
        <taxon>malvids</taxon>
        <taxon>Sapindales</taxon>
        <taxon>Rutaceae</taxon>
        <taxon>Aurantioideae</taxon>
        <taxon>Citrus</taxon>
    </lineage>
</organism>
<keyword id="KW-0150">Chloroplast</keyword>
<keyword id="KW-0472">Membrane</keyword>
<keyword id="KW-0934">Plastid</keyword>
<keyword id="KW-0808">Transferase</keyword>
<keyword id="KW-0809">Transit peptide</keyword>
<keyword id="KW-0812">Transmembrane</keyword>
<keyword id="KW-1133">Transmembrane helix</keyword>